<accession>Q9R6W9</accession>
<name>KDPC_ANASL</name>
<keyword id="KW-0067">ATP-binding</keyword>
<keyword id="KW-1003">Cell membrane</keyword>
<keyword id="KW-0406">Ion transport</keyword>
<keyword id="KW-0472">Membrane</keyword>
<keyword id="KW-0547">Nucleotide-binding</keyword>
<keyword id="KW-0630">Potassium</keyword>
<keyword id="KW-0633">Potassium transport</keyword>
<keyword id="KW-0812">Transmembrane</keyword>
<keyword id="KW-1133">Transmembrane helix</keyword>
<keyword id="KW-0813">Transport</keyword>
<protein>
    <recommendedName>
        <fullName evidence="1">Potassium-transporting ATPase KdpC subunit</fullName>
    </recommendedName>
    <alternativeName>
        <fullName evidence="1">ATP phosphohydrolase [potassium-transporting] C chain</fullName>
    </alternativeName>
    <alternativeName>
        <fullName evidence="1">Potassium-binding and translocating subunit C</fullName>
    </alternativeName>
    <alternativeName>
        <fullName evidence="1">Potassium-translocating ATPase C chain</fullName>
    </alternativeName>
</protein>
<sequence>MSLIRELLRAIRITLIFWLITAIIYPLAILVVGQGLFPYQANGSIMQNIEAQPIGSALIGQVFASEQYFHSRPSASRYSQGRRARPTGISGGSNLAPSNPALLNRIIEEANQLREENIQPIEDLIYSSGSGLDPHISIQAASQQIERVARARNVQPDEILRLMNKYTDGRFLWIFGEPGVNVLRLNYALDLQDFNNQQNR</sequence>
<reference key="1">
    <citation type="submission" date="1999-12" db="EMBL/GenBank/DDBJ databases">
        <title>The kdp operon of the heterocystous nitrogen-fixing cyanobacterium Anabaena sp. strain L-31.</title>
        <authorList>
            <person name="Ballal A.D."/>
            <person name="Gassel M."/>
            <person name="Schleussinger E."/>
            <person name="Rajaram H."/>
            <person name="Apte S.K."/>
            <person name="Altendorf K."/>
        </authorList>
    </citation>
    <scope>NUCLEOTIDE SEQUENCE [GENOMIC DNA]</scope>
</reference>
<proteinExistence type="inferred from homology"/>
<gene>
    <name evidence="1" type="primary">kdpC</name>
</gene>
<comment type="function">
    <text evidence="1">Part of the high-affinity ATP-driven potassium transport (or Kdp) system, which catalyzes the hydrolysis of ATP coupled with the electrogenic transport of potassium into the cytoplasm. This subunit acts as a catalytic chaperone that increases the ATP-binding affinity of the ATP-hydrolyzing subunit KdpB by the formation of a transient KdpB/KdpC/ATP ternary complex.</text>
</comment>
<comment type="subunit">
    <text evidence="1">The system is composed of three essential subunits: KdpA, KdpB and KdpC.</text>
</comment>
<comment type="subcellular location">
    <subcellularLocation>
        <location evidence="1">Cell membrane</location>
        <topology evidence="1">Single-pass membrane protein</topology>
    </subcellularLocation>
</comment>
<comment type="similarity">
    <text evidence="1">Belongs to the KdpC family.</text>
</comment>
<dbReference type="EMBL" id="AF213466">
    <property type="protein sequence ID" value="AAF19989.1"/>
    <property type="molecule type" value="Genomic_DNA"/>
</dbReference>
<dbReference type="PIR" id="T46848">
    <property type="entry name" value="T46848"/>
</dbReference>
<dbReference type="SMR" id="Q9R6W9"/>
<dbReference type="GO" id="GO:0005886">
    <property type="term" value="C:plasma membrane"/>
    <property type="evidence" value="ECO:0007669"/>
    <property type="project" value="UniProtKB-SubCell"/>
</dbReference>
<dbReference type="GO" id="GO:0005524">
    <property type="term" value="F:ATP binding"/>
    <property type="evidence" value="ECO:0007669"/>
    <property type="project" value="UniProtKB-UniRule"/>
</dbReference>
<dbReference type="GO" id="GO:0008556">
    <property type="term" value="F:P-type potassium transmembrane transporter activity"/>
    <property type="evidence" value="ECO:0007669"/>
    <property type="project" value="InterPro"/>
</dbReference>
<dbReference type="HAMAP" id="MF_00276">
    <property type="entry name" value="KdpC"/>
    <property type="match status" value="1"/>
</dbReference>
<dbReference type="InterPro" id="IPR003820">
    <property type="entry name" value="KdpC"/>
</dbReference>
<dbReference type="NCBIfam" id="TIGR00681">
    <property type="entry name" value="kdpC"/>
    <property type="match status" value="1"/>
</dbReference>
<dbReference type="NCBIfam" id="NF001454">
    <property type="entry name" value="PRK00315.1"/>
    <property type="match status" value="1"/>
</dbReference>
<dbReference type="NCBIfam" id="NF010607">
    <property type="entry name" value="PRK14003.1"/>
    <property type="match status" value="1"/>
</dbReference>
<dbReference type="PANTHER" id="PTHR30042">
    <property type="entry name" value="POTASSIUM-TRANSPORTING ATPASE C CHAIN"/>
    <property type="match status" value="1"/>
</dbReference>
<dbReference type="PANTHER" id="PTHR30042:SF2">
    <property type="entry name" value="POTASSIUM-TRANSPORTING ATPASE KDPC SUBUNIT"/>
    <property type="match status" value="1"/>
</dbReference>
<dbReference type="Pfam" id="PF02669">
    <property type="entry name" value="KdpC"/>
    <property type="match status" value="1"/>
</dbReference>
<dbReference type="PIRSF" id="PIRSF001296">
    <property type="entry name" value="K_ATPase_KdpC"/>
    <property type="match status" value="1"/>
</dbReference>
<feature type="chain" id="PRO_0000196982" description="Potassium-transporting ATPase KdpC subunit">
    <location>
        <begin position="1"/>
        <end position="200"/>
    </location>
</feature>
<feature type="transmembrane region" description="Helical" evidence="1">
    <location>
        <begin position="13"/>
        <end position="33"/>
    </location>
</feature>
<evidence type="ECO:0000255" key="1">
    <source>
        <dbReference type="HAMAP-Rule" id="MF_00276"/>
    </source>
</evidence>
<organism>
    <name type="scientific">Anabaena sp. (strain L31)</name>
    <dbReference type="NCBI Taxonomy" id="29412"/>
    <lineage>
        <taxon>Bacteria</taxon>
        <taxon>Bacillati</taxon>
        <taxon>Cyanobacteriota</taxon>
        <taxon>Cyanophyceae</taxon>
        <taxon>Nostocales</taxon>
        <taxon>Nostocaceae</taxon>
        <taxon>Anabaena</taxon>
    </lineage>
</organism>